<protein>
    <recommendedName>
        <fullName>Mitochondrial import inner membrane translocase subunit TIM17-3</fullName>
    </recommendedName>
</protein>
<feature type="chain" id="PRO_0000420933" description="Mitochondrial import inner membrane translocase subunit TIM17-3">
    <location>
        <begin position="1"/>
        <end position="133"/>
    </location>
</feature>
<feature type="transmembrane region" description="Helical" evidence="2">
    <location>
        <begin position="15"/>
        <end position="35"/>
    </location>
</feature>
<feature type="transmembrane region" description="Helical" evidence="2">
    <location>
        <begin position="63"/>
        <end position="83"/>
    </location>
</feature>
<feature type="transmembrane region" description="Helical" evidence="2">
    <location>
        <begin position="90"/>
        <end position="105"/>
    </location>
</feature>
<feature type="transmembrane region" description="Helical" evidence="2">
    <location>
        <begin position="115"/>
        <end position="128"/>
    </location>
</feature>
<feature type="sequence conflict" description="In Ref. 5; AAM65488." evidence="5" ref="5">
    <original>A</original>
    <variation>T</variation>
    <location>
        <position position="18"/>
    </location>
</feature>
<feature type="sequence conflict" description="In Ref. 1; AAR26372." evidence="5" ref="1">
    <original>A</original>
    <variation>T</variation>
    <location>
        <position position="46"/>
    </location>
</feature>
<feature type="sequence conflict" description="In Ref. 5; AAM65488." evidence="5" ref="5">
    <original>A</original>
    <variation>S</variation>
    <location>
        <position position="79"/>
    </location>
</feature>
<feature type="sequence conflict" description="In Ref. 1; AAR26372." evidence="5" ref="1">
    <original>T</original>
    <variation>A</variation>
    <location>
        <position position="99"/>
    </location>
</feature>
<dbReference type="EMBL" id="AY463971">
    <property type="protein sequence ID" value="AAR26372.1"/>
    <property type="molecule type" value="mRNA"/>
</dbReference>
<dbReference type="EMBL" id="AL163814">
    <property type="protein sequence ID" value="CAB87687.1"/>
    <property type="molecule type" value="Genomic_DNA"/>
</dbReference>
<dbReference type="EMBL" id="CP002688">
    <property type="protein sequence ID" value="AED91710.1"/>
    <property type="molecule type" value="Genomic_DNA"/>
</dbReference>
<dbReference type="EMBL" id="BT002810">
    <property type="protein sequence ID" value="AAO22630.1"/>
    <property type="molecule type" value="mRNA"/>
</dbReference>
<dbReference type="EMBL" id="BT004367">
    <property type="protein sequence ID" value="AAO42361.1"/>
    <property type="molecule type" value="mRNA"/>
</dbReference>
<dbReference type="EMBL" id="AY087940">
    <property type="protein sequence ID" value="AAM65488.1"/>
    <property type="molecule type" value="mRNA"/>
</dbReference>
<dbReference type="PIR" id="T48528">
    <property type="entry name" value="T48528"/>
</dbReference>
<dbReference type="RefSeq" id="NP_196730.1">
    <property type="nucleotide sequence ID" value="NM_121207.4"/>
</dbReference>
<dbReference type="SMR" id="Q9LYG1"/>
<dbReference type="FunCoup" id="Q9LYG1">
    <property type="interactions" value="739"/>
</dbReference>
<dbReference type="STRING" id="3702.Q9LYG1"/>
<dbReference type="PaxDb" id="3702-AT5G11690.1"/>
<dbReference type="ProteomicsDB" id="234421"/>
<dbReference type="EnsemblPlants" id="AT5G11690.1">
    <property type="protein sequence ID" value="AT5G11690.1"/>
    <property type="gene ID" value="AT5G11690"/>
</dbReference>
<dbReference type="GeneID" id="831041"/>
<dbReference type="Gramene" id="AT5G11690.1">
    <property type="protein sequence ID" value="AT5G11690.1"/>
    <property type="gene ID" value="AT5G11690"/>
</dbReference>
<dbReference type="KEGG" id="ath:AT5G11690"/>
<dbReference type="Araport" id="AT5G11690"/>
<dbReference type="TAIR" id="AT5G11690">
    <property type="gene designation" value="TIM17-3"/>
</dbReference>
<dbReference type="eggNOG" id="KOG1652">
    <property type="taxonomic scope" value="Eukaryota"/>
</dbReference>
<dbReference type="HOGENOM" id="CLU_087811_3_1_1"/>
<dbReference type="InParanoid" id="Q9LYG1"/>
<dbReference type="OMA" id="XPQFAED"/>
<dbReference type="PhylomeDB" id="Q9LYG1"/>
<dbReference type="PRO" id="PR:Q9LYG1"/>
<dbReference type="Proteomes" id="UP000006548">
    <property type="component" value="Chromosome 5"/>
</dbReference>
<dbReference type="ExpressionAtlas" id="Q9LYG1">
    <property type="expression patterns" value="baseline and differential"/>
</dbReference>
<dbReference type="GO" id="GO:0005744">
    <property type="term" value="C:TIM23 mitochondrial import inner membrane translocase complex"/>
    <property type="evidence" value="ECO:0000304"/>
    <property type="project" value="TAIR"/>
</dbReference>
<dbReference type="PANTHER" id="PTHR10485">
    <property type="entry name" value="MITOCHONDRIAL IMPORT INNER MEMBRANE TRANSLOCASE SUBUNIT TIM-17"/>
    <property type="match status" value="1"/>
</dbReference>
<dbReference type="PANTHER" id="PTHR10485:SF15">
    <property type="entry name" value="MITOCHONDRIAL IMPORT INNER MEMBRANE TRANSLOCASE SUBUNIT TIM17-3"/>
    <property type="match status" value="1"/>
</dbReference>
<dbReference type="Pfam" id="PF02466">
    <property type="entry name" value="Tim17"/>
    <property type="match status" value="1"/>
</dbReference>
<evidence type="ECO:0000250" key="1"/>
<evidence type="ECO:0000255" key="2"/>
<evidence type="ECO:0000269" key="3">
    <source>
    </source>
</evidence>
<evidence type="ECO:0000269" key="4">
    <source>
    </source>
</evidence>
<evidence type="ECO:0000305" key="5"/>
<keyword id="KW-0472">Membrane</keyword>
<keyword id="KW-0496">Mitochondrion</keyword>
<keyword id="KW-0999">Mitochondrion inner membrane</keyword>
<keyword id="KW-1185">Reference proteome</keyword>
<keyword id="KW-0812">Transmembrane</keyword>
<keyword id="KW-1133">Transmembrane helix</keyword>
<comment type="function">
    <text evidence="1">Essential component of the TIM17:23 complex, a complex that mediates the translocation of transit peptide-containing proteins across the mitochondrial inner membrane. Links the inner and outer membranes (By similarity).</text>
</comment>
<comment type="subunit">
    <text evidence="1">Component of the TIM17:23 complex at least composed of TIM23, TIM17 and TIM50. The complex interacts with the TIM44 component of the PAM complex (By similarity).</text>
</comment>
<comment type="subcellular location">
    <subcellularLocation>
        <location evidence="5">Mitochondrion inner membrane</location>
        <topology evidence="5">Multi-pass membrane protein</topology>
    </subcellularLocation>
</comment>
<comment type="tissue specificity">
    <text evidence="3 4">Expressed in cotyledons, roots, flowers and leaves.</text>
</comment>
<comment type="induction">
    <text evidence="4">Down-regulated after antimycin A or rotenone treatments.</text>
</comment>
<comment type="similarity">
    <text evidence="5">Belongs to the Tim17/Tim22/Tim23 family.</text>
</comment>
<gene>
    <name type="primary">TIM17-3</name>
    <name type="ordered locus">At5g11690</name>
    <name type="ORF">T22P22.80</name>
</gene>
<reference key="1">
    <citation type="journal article" date="2003" name="Plant Physiol.">
        <title>Identification, expression, and import of components 17 and 23 of the inner mitochondrial membrane translocase from Arabidopsis.</title>
        <authorList>
            <person name="Murcha M.W."/>
            <person name="Lister R."/>
            <person name="Ho A.Y."/>
            <person name="Whelan J."/>
        </authorList>
    </citation>
    <scope>NUCLEOTIDE SEQUENCE [MRNA]</scope>
    <scope>TISSUE SPECIFICITY</scope>
</reference>
<reference key="2">
    <citation type="journal article" date="2000" name="Nature">
        <title>Sequence and analysis of chromosome 5 of the plant Arabidopsis thaliana.</title>
        <authorList>
            <person name="Tabata S."/>
            <person name="Kaneko T."/>
            <person name="Nakamura Y."/>
            <person name="Kotani H."/>
            <person name="Kato T."/>
            <person name="Asamizu E."/>
            <person name="Miyajima N."/>
            <person name="Sasamoto S."/>
            <person name="Kimura T."/>
            <person name="Hosouchi T."/>
            <person name="Kawashima K."/>
            <person name="Kohara M."/>
            <person name="Matsumoto M."/>
            <person name="Matsuno A."/>
            <person name="Muraki A."/>
            <person name="Nakayama S."/>
            <person name="Nakazaki N."/>
            <person name="Naruo K."/>
            <person name="Okumura S."/>
            <person name="Shinpo S."/>
            <person name="Takeuchi C."/>
            <person name="Wada T."/>
            <person name="Watanabe A."/>
            <person name="Yamada M."/>
            <person name="Yasuda M."/>
            <person name="Sato S."/>
            <person name="de la Bastide M."/>
            <person name="Huang E."/>
            <person name="Spiegel L."/>
            <person name="Gnoj L."/>
            <person name="O'Shaughnessy A."/>
            <person name="Preston R."/>
            <person name="Habermann K."/>
            <person name="Murray J."/>
            <person name="Johnson D."/>
            <person name="Rohlfing T."/>
            <person name="Nelson J."/>
            <person name="Stoneking T."/>
            <person name="Pepin K."/>
            <person name="Spieth J."/>
            <person name="Sekhon M."/>
            <person name="Armstrong J."/>
            <person name="Becker M."/>
            <person name="Belter E."/>
            <person name="Cordum H."/>
            <person name="Cordes M."/>
            <person name="Courtney L."/>
            <person name="Courtney W."/>
            <person name="Dante M."/>
            <person name="Du H."/>
            <person name="Edwards J."/>
            <person name="Fryman J."/>
            <person name="Haakensen B."/>
            <person name="Lamar E."/>
            <person name="Latreille P."/>
            <person name="Leonard S."/>
            <person name="Meyer R."/>
            <person name="Mulvaney E."/>
            <person name="Ozersky P."/>
            <person name="Riley A."/>
            <person name="Strowmatt C."/>
            <person name="Wagner-McPherson C."/>
            <person name="Wollam A."/>
            <person name="Yoakum M."/>
            <person name="Bell M."/>
            <person name="Dedhia N."/>
            <person name="Parnell L."/>
            <person name="Shah R."/>
            <person name="Rodriguez M."/>
            <person name="Hoon See L."/>
            <person name="Vil D."/>
            <person name="Baker J."/>
            <person name="Kirchoff K."/>
            <person name="Toth K."/>
            <person name="King L."/>
            <person name="Bahret A."/>
            <person name="Miller B."/>
            <person name="Marra M.A."/>
            <person name="Martienssen R."/>
            <person name="McCombie W.R."/>
            <person name="Wilson R.K."/>
            <person name="Murphy G."/>
            <person name="Bancroft I."/>
            <person name="Volckaert G."/>
            <person name="Wambutt R."/>
            <person name="Duesterhoeft A."/>
            <person name="Stiekema W."/>
            <person name="Pohl T."/>
            <person name="Entian K.-D."/>
            <person name="Terryn N."/>
            <person name="Hartley N."/>
            <person name="Bent E."/>
            <person name="Johnson S."/>
            <person name="Langham S.-A."/>
            <person name="McCullagh B."/>
            <person name="Robben J."/>
            <person name="Grymonprez B."/>
            <person name="Zimmermann W."/>
            <person name="Ramsperger U."/>
            <person name="Wedler H."/>
            <person name="Balke K."/>
            <person name="Wedler E."/>
            <person name="Peters S."/>
            <person name="van Staveren M."/>
            <person name="Dirkse W."/>
            <person name="Mooijman P."/>
            <person name="Klein Lankhorst R."/>
            <person name="Weitzenegger T."/>
            <person name="Bothe G."/>
            <person name="Rose M."/>
            <person name="Hauf J."/>
            <person name="Berneiser S."/>
            <person name="Hempel S."/>
            <person name="Feldpausch M."/>
            <person name="Lamberth S."/>
            <person name="Villarroel R."/>
            <person name="Gielen J."/>
            <person name="Ardiles W."/>
            <person name="Bents O."/>
            <person name="Lemcke K."/>
            <person name="Kolesov G."/>
            <person name="Mayer K.F.X."/>
            <person name="Rudd S."/>
            <person name="Schoof H."/>
            <person name="Schueller C."/>
            <person name="Zaccaria P."/>
            <person name="Mewes H.-W."/>
            <person name="Bevan M."/>
            <person name="Fransz P.F."/>
        </authorList>
    </citation>
    <scope>NUCLEOTIDE SEQUENCE [LARGE SCALE GENOMIC DNA]</scope>
    <source>
        <strain>cv. Columbia</strain>
    </source>
</reference>
<reference key="3">
    <citation type="journal article" date="2017" name="Plant J.">
        <title>Araport11: a complete reannotation of the Arabidopsis thaliana reference genome.</title>
        <authorList>
            <person name="Cheng C.Y."/>
            <person name="Krishnakumar V."/>
            <person name="Chan A.P."/>
            <person name="Thibaud-Nissen F."/>
            <person name="Schobel S."/>
            <person name="Town C.D."/>
        </authorList>
    </citation>
    <scope>GENOME REANNOTATION</scope>
    <source>
        <strain>cv. Columbia</strain>
    </source>
</reference>
<reference key="4">
    <citation type="journal article" date="2003" name="Science">
        <title>Empirical analysis of transcriptional activity in the Arabidopsis genome.</title>
        <authorList>
            <person name="Yamada K."/>
            <person name="Lim J."/>
            <person name="Dale J.M."/>
            <person name="Chen H."/>
            <person name="Shinn P."/>
            <person name="Palm C.J."/>
            <person name="Southwick A.M."/>
            <person name="Wu H.C."/>
            <person name="Kim C.J."/>
            <person name="Nguyen M."/>
            <person name="Pham P.K."/>
            <person name="Cheuk R.F."/>
            <person name="Karlin-Newmann G."/>
            <person name="Liu S.X."/>
            <person name="Lam B."/>
            <person name="Sakano H."/>
            <person name="Wu T."/>
            <person name="Yu G."/>
            <person name="Miranda M."/>
            <person name="Quach H.L."/>
            <person name="Tripp M."/>
            <person name="Chang C.H."/>
            <person name="Lee J.M."/>
            <person name="Toriumi M.J."/>
            <person name="Chan M.M."/>
            <person name="Tang C.C."/>
            <person name="Onodera C.S."/>
            <person name="Deng J.M."/>
            <person name="Akiyama K."/>
            <person name="Ansari Y."/>
            <person name="Arakawa T."/>
            <person name="Banh J."/>
            <person name="Banno F."/>
            <person name="Bowser L."/>
            <person name="Brooks S.Y."/>
            <person name="Carninci P."/>
            <person name="Chao Q."/>
            <person name="Choy N."/>
            <person name="Enju A."/>
            <person name="Goldsmith A.D."/>
            <person name="Gurjal M."/>
            <person name="Hansen N.F."/>
            <person name="Hayashizaki Y."/>
            <person name="Johnson-Hopson C."/>
            <person name="Hsuan V.W."/>
            <person name="Iida K."/>
            <person name="Karnes M."/>
            <person name="Khan S."/>
            <person name="Koesema E."/>
            <person name="Ishida J."/>
            <person name="Jiang P.X."/>
            <person name="Jones T."/>
            <person name="Kawai J."/>
            <person name="Kamiya A."/>
            <person name="Meyers C."/>
            <person name="Nakajima M."/>
            <person name="Narusaka M."/>
            <person name="Seki M."/>
            <person name="Sakurai T."/>
            <person name="Satou M."/>
            <person name="Tamse R."/>
            <person name="Vaysberg M."/>
            <person name="Wallender E.K."/>
            <person name="Wong C."/>
            <person name="Yamamura Y."/>
            <person name="Yuan S."/>
            <person name="Shinozaki K."/>
            <person name="Davis R.W."/>
            <person name="Theologis A."/>
            <person name="Ecker J.R."/>
        </authorList>
    </citation>
    <scope>NUCLEOTIDE SEQUENCE [LARGE SCALE MRNA]</scope>
    <source>
        <strain>cv. Columbia</strain>
    </source>
</reference>
<reference key="5">
    <citation type="submission" date="2002-03" db="EMBL/GenBank/DDBJ databases">
        <title>Full-length cDNA from Arabidopsis thaliana.</title>
        <authorList>
            <person name="Brover V.V."/>
            <person name="Troukhan M.E."/>
            <person name="Alexandrov N.A."/>
            <person name="Lu Y.-P."/>
            <person name="Flavell R.B."/>
            <person name="Feldmann K.A."/>
        </authorList>
    </citation>
    <scope>NUCLEOTIDE SEQUENCE [LARGE SCALE MRNA]</scope>
</reference>
<reference key="6">
    <citation type="journal article" date="2004" name="Plant Physiol.">
        <title>A transcriptomic and proteomic characterization of the Arabidopsis mitochondrial protein import apparatus and its response to mitochondrial dysfunction.</title>
        <authorList>
            <person name="Lister R."/>
            <person name="Chew O."/>
            <person name="Lee M.N."/>
            <person name="Heazlewood J.L."/>
            <person name="Clifton R."/>
            <person name="Parker K.L."/>
            <person name="Millar A.H."/>
            <person name="Whelan J."/>
        </authorList>
    </citation>
    <scope>TISSUE SPECIFICITY</scope>
    <scope>INDUCTION</scope>
</reference>
<reference key="7">
    <citation type="journal article" date="2007" name="Plant Physiol.">
        <title>Characterization of the preprotein and amino acid transporter gene family in Arabidopsis.</title>
        <authorList>
            <person name="Murcha M.W."/>
            <person name="Elhafez D."/>
            <person name="Lister R."/>
            <person name="Tonti-Filippini J."/>
            <person name="Baumgartner M."/>
            <person name="Philippar K."/>
            <person name="Carrie C."/>
            <person name="Mokranjac D."/>
            <person name="Soll J."/>
            <person name="Whelan J."/>
        </authorList>
    </citation>
    <scope>SUBCELLULAR LOCATION</scope>
</reference>
<organism>
    <name type="scientific">Arabidopsis thaliana</name>
    <name type="common">Mouse-ear cress</name>
    <dbReference type="NCBI Taxonomy" id="3702"/>
    <lineage>
        <taxon>Eukaryota</taxon>
        <taxon>Viridiplantae</taxon>
        <taxon>Streptophyta</taxon>
        <taxon>Embryophyta</taxon>
        <taxon>Tracheophyta</taxon>
        <taxon>Spermatophyta</taxon>
        <taxon>Magnoliopsida</taxon>
        <taxon>eudicotyledons</taxon>
        <taxon>Gunneridae</taxon>
        <taxon>Pentapetalae</taxon>
        <taxon>rosids</taxon>
        <taxon>malvids</taxon>
        <taxon>Brassicales</taxon>
        <taxon>Brassicaceae</taxon>
        <taxon>Camelineae</taxon>
        <taxon>Arabidopsis</taxon>
    </lineage>
</organism>
<proteinExistence type="evidence at transcript level"/>
<sequence length="133" mass="13853">MDTKKKSKEHGLYRIVNAIGYAFGAGAVGGSVYHFVRGAYNSPIGARYVGGTQAASMNAPRLGGTFAVFGGLLSTFDYALVRIRKKEDPWNSIVAGAATGGVLSIRKGVVAASTSAVMFGFFLAVLNPPFGSK</sequence>
<accession>Q9LYG1</accession>
<accession>Q6S709</accession>
<accession>Q8LAB0</accession>
<name>TI173_ARATH</name>